<comment type="function">
    <text evidence="1 4">Together with BzaB, probably catalyzes the conversion of aminoimidazole ribotide (AIR) to 5-hydroxybenzimidazole (5-HBI) in a radical S-adenosyl-L-methionine (SAM)-dependent reaction. Is thus involved in the anaerobic biosynthesis of the benzimidazole lower axial ligand of the cobamide produced by M.thermoacetica (PubMed:26246619). Requires BzaB for catalytic activity, as BzaA alone displays no activity (By similarity).</text>
</comment>
<comment type="catalytic activity">
    <reaction evidence="1">
        <text>5-amino-1-(5-phospho-beta-D-ribosyl)imidazole + AH2 + S-adenosyl-L-methionine = 5-hydroxybenzimidazole + 5'-deoxyadenosine + formate + L-methionine + A + NH4(+) + phosphate + 2 H(+)</text>
        <dbReference type="Rhea" id="RHEA:53504"/>
        <dbReference type="ChEBI" id="CHEBI:13193"/>
        <dbReference type="ChEBI" id="CHEBI:15378"/>
        <dbReference type="ChEBI" id="CHEBI:15740"/>
        <dbReference type="ChEBI" id="CHEBI:17319"/>
        <dbReference type="ChEBI" id="CHEBI:17499"/>
        <dbReference type="ChEBI" id="CHEBI:28938"/>
        <dbReference type="ChEBI" id="CHEBI:43474"/>
        <dbReference type="ChEBI" id="CHEBI:57844"/>
        <dbReference type="ChEBI" id="CHEBI:59789"/>
        <dbReference type="ChEBI" id="CHEBI:137404"/>
        <dbReference type="ChEBI" id="CHEBI:137981"/>
        <dbReference type="EC" id="4.1.99.23"/>
    </reaction>
</comment>
<comment type="cofactor">
    <cofactor evidence="2">
        <name>[4Fe-4S] cluster</name>
        <dbReference type="ChEBI" id="CHEBI:49883"/>
    </cofactor>
    <text evidence="3">Binds 1 [4Fe-4S] cluster per subunit. The cluster is coordinated with 3 cysteines and an exchangeable S-adenosyl-L-methionine.</text>
</comment>
<comment type="similarity">
    <text evidence="6">Belongs to the ThiC family. 5-hydroxybenzimidazole synthase subfamily.</text>
</comment>
<feature type="chain" id="PRO_0000242274" description="5-hydroxybenzimidazole synthase BzaA">
    <location>
        <begin position="1"/>
        <end position="432"/>
    </location>
</feature>
<feature type="binding site" evidence="3">
    <location>
        <position position="95"/>
    </location>
    <ligand>
        <name>substrate</name>
    </ligand>
</feature>
<feature type="binding site" evidence="3">
    <location>
        <position position="124"/>
    </location>
    <ligand>
        <name>substrate</name>
    </ligand>
</feature>
<feature type="binding site" evidence="3">
    <location>
        <position position="163"/>
    </location>
    <ligand>
        <name>substrate</name>
    </ligand>
</feature>
<feature type="binding site" evidence="3">
    <location>
        <begin position="185"/>
        <end position="187"/>
    </location>
    <ligand>
        <name>substrate</name>
    </ligand>
</feature>
<feature type="binding site" evidence="3">
    <location>
        <begin position="226"/>
        <end position="229"/>
    </location>
    <ligand>
        <name>substrate</name>
    </ligand>
</feature>
<feature type="binding site" evidence="3">
    <location>
        <position position="269"/>
    </location>
    <ligand>
        <name>Zn(2+)</name>
        <dbReference type="ChEBI" id="CHEBI:29105"/>
    </ligand>
</feature>
<feature type="binding site" evidence="3">
    <location>
        <position position="292"/>
    </location>
    <ligand>
        <name>substrate</name>
    </ligand>
</feature>
<feature type="binding site" evidence="3">
    <location>
        <position position="333"/>
    </location>
    <ligand>
        <name>Zn(2+)</name>
        <dbReference type="ChEBI" id="CHEBI:29105"/>
    </ligand>
</feature>
<feature type="binding site" evidence="3">
    <location>
        <position position="409"/>
    </location>
    <ligand>
        <name>[4Fe-4S] cluster</name>
        <dbReference type="ChEBI" id="CHEBI:49883"/>
        <note>4Fe-4S-S-AdoMet</note>
    </ligand>
</feature>
<feature type="binding site" evidence="3">
    <location>
        <position position="412"/>
    </location>
    <ligand>
        <name>[4Fe-4S] cluster</name>
        <dbReference type="ChEBI" id="CHEBI:49883"/>
        <note>4Fe-4S-S-AdoMet</note>
    </ligand>
</feature>
<feature type="binding site" evidence="3">
    <location>
        <position position="416"/>
    </location>
    <ligand>
        <name>[4Fe-4S] cluster</name>
        <dbReference type="ChEBI" id="CHEBI:49883"/>
        <note>4Fe-4S-S-AdoMet</note>
    </ligand>
</feature>
<dbReference type="EC" id="4.1.99.23" evidence="1"/>
<dbReference type="EMBL" id="KT347436">
    <property type="protein sequence ID" value="AKV89416.1"/>
    <property type="molecule type" value="Genomic_DNA"/>
</dbReference>
<dbReference type="EMBL" id="CP000232">
    <property type="protein sequence ID" value="ABC20025.1"/>
    <property type="molecule type" value="Genomic_DNA"/>
</dbReference>
<dbReference type="RefSeq" id="YP_430568.1">
    <property type="nucleotide sequence ID" value="NC_007644.1"/>
</dbReference>
<dbReference type="SMR" id="Q2RHR4"/>
<dbReference type="STRING" id="264732.Moth_1723"/>
<dbReference type="EnsemblBacteria" id="ABC20025">
    <property type="protein sequence ID" value="ABC20025"/>
    <property type="gene ID" value="Moth_1723"/>
</dbReference>
<dbReference type="KEGG" id="mta:Moth_1723"/>
<dbReference type="PATRIC" id="fig|264732.11.peg.1866"/>
<dbReference type="eggNOG" id="COG0422">
    <property type="taxonomic scope" value="Bacteria"/>
</dbReference>
<dbReference type="HOGENOM" id="CLU_013181_2_2_9"/>
<dbReference type="OrthoDB" id="9805897at2"/>
<dbReference type="BioCyc" id="MetaCyc:MONOMER-20982"/>
<dbReference type="GO" id="GO:0005829">
    <property type="term" value="C:cytosol"/>
    <property type="evidence" value="ECO:0007669"/>
    <property type="project" value="TreeGrafter"/>
</dbReference>
<dbReference type="GO" id="GO:0051539">
    <property type="term" value="F:4 iron, 4 sulfur cluster binding"/>
    <property type="evidence" value="ECO:0007669"/>
    <property type="project" value="UniProtKB-KW"/>
</dbReference>
<dbReference type="GO" id="GO:0016829">
    <property type="term" value="F:lyase activity"/>
    <property type="evidence" value="ECO:0007669"/>
    <property type="project" value="UniProtKB-KW"/>
</dbReference>
<dbReference type="GO" id="GO:0046872">
    <property type="term" value="F:metal ion binding"/>
    <property type="evidence" value="ECO:0007669"/>
    <property type="project" value="UniProtKB-KW"/>
</dbReference>
<dbReference type="GO" id="GO:0009236">
    <property type="term" value="P:cobalamin biosynthetic process"/>
    <property type="evidence" value="ECO:0007669"/>
    <property type="project" value="UniProtKB-KW"/>
</dbReference>
<dbReference type="GO" id="GO:0009228">
    <property type="term" value="P:thiamine biosynthetic process"/>
    <property type="evidence" value="ECO:0007669"/>
    <property type="project" value="InterPro"/>
</dbReference>
<dbReference type="Gene3D" id="6.10.250.620">
    <property type="match status" value="1"/>
</dbReference>
<dbReference type="Gene3D" id="3.20.20.540">
    <property type="entry name" value="Radical SAM ThiC family, central domain"/>
    <property type="match status" value="1"/>
</dbReference>
<dbReference type="InterPro" id="IPR038521">
    <property type="entry name" value="ThiC/Bza_core_dom"/>
</dbReference>
<dbReference type="InterPro" id="IPR002817">
    <property type="entry name" value="ThiC/BzaA/B"/>
</dbReference>
<dbReference type="NCBIfam" id="NF009895">
    <property type="entry name" value="PRK13352.1"/>
    <property type="match status" value="1"/>
</dbReference>
<dbReference type="NCBIfam" id="TIGR00190">
    <property type="entry name" value="thiC"/>
    <property type="match status" value="1"/>
</dbReference>
<dbReference type="PANTHER" id="PTHR30557:SF1">
    <property type="entry name" value="PHOSPHOMETHYLPYRIMIDINE SYNTHASE, CHLOROPLASTIC"/>
    <property type="match status" value="1"/>
</dbReference>
<dbReference type="PANTHER" id="PTHR30557">
    <property type="entry name" value="THIAMINE BIOSYNTHESIS PROTEIN THIC"/>
    <property type="match status" value="1"/>
</dbReference>
<dbReference type="Pfam" id="PF01964">
    <property type="entry name" value="ThiC_Rad_SAM"/>
    <property type="match status" value="1"/>
</dbReference>
<dbReference type="SFLD" id="SFLDF00407">
    <property type="entry name" value="phosphomethylpyrimidine_syntha"/>
    <property type="match status" value="1"/>
</dbReference>
<dbReference type="SFLD" id="SFLDG01114">
    <property type="entry name" value="phosphomethylpyrimidine_syntha"/>
    <property type="match status" value="1"/>
</dbReference>
<dbReference type="SFLD" id="SFLDS00113">
    <property type="entry name" value="Radical_SAM_Phosphomethylpyrim"/>
    <property type="match status" value="1"/>
</dbReference>
<reference key="1">
    <citation type="journal article" date="2015" name="Proc. Natl. Acad. Sci. U.S.A.">
        <title>Anaerobic biosynthesis of the lower ligand of vitamin B12.</title>
        <authorList>
            <person name="Hazra A.B."/>
            <person name="Han A.W."/>
            <person name="Mehta A.P."/>
            <person name="Mok K.C."/>
            <person name="Osadchiy V."/>
            <person name="Begley T.P."/>
            <person name="Taga M.E."/>
        </authorList>
    </citation>
    <scope>NUCLEOTIDE SEQUENCE [GENOMIC DNA]</scope>
    <scope>FUNCTION</scope>
    <source>
        <strain>ATCC 39073 / JCM 9320</strain>
    </source>
</reference>
<reference key="2">
    <citation type="journal article" date="2008" name="Environ. Microbiol.">
        <title>The complete genome sequence of Moorella thermoacetica (f. Clostridium thermoaceticum).</title>
        <authorList>
            <person name="Pierce E."/>
            <person name="Xie G."/>
            <person name="Barabote R.D."/>
            <person name="Saunders E."/>
            <person name="Han C.S."/>
            <person name="Detter J.C."/>
            <person name="Richardson P."/>
            <person name="Brettin T.S."/>
            <person name="Das A."/>
            <person name="Ljungdahl L.G."/>
            <person name="Ragsdale S.W."/>
        </authorList>
    </citation>
    <scope>NUCLEOTIDE SEQUENCE [LARGE SCALE GENOMIC DNA]</scope>
    <source>
        <strain>ATCC 39073 / JCM 9320</strain>
    </source>
</reference>
<proteinExistence type="inferred from homology"/>
<evidence type="ECO:0000250" key="1">
    <source>
        <dbReference type="UniProtKB" id="A0A0K1TPY7"/>
    </source>
</evidence>
<evidence type="ECO:0000250" key="2">
    <source>
        <dbReference type="UniProtKB" id="P61425"/>
    </source>
</evidence>
<evidence type="ECO:0000250" key="3">
    <source>
        <dbReference type="UniProtKB" id="Q9A6Q5"/>
    </source>
</evidence>
<evidence type="ECO:0000269" key="4">
    <source>
    </source>
</evidence>
<evidence type="ECO:0000303" key="5">
    <source>
    </source>
</evidence>
<evidence type="ECO:0000305" key="6"/>
<evidence type="ECO:0000305" key="7">
    <source>
    </source>
</evidence>
<organism>
    <name type="scientific">Moorella thermoacetica (strain ATCC 39073 / JCM 9320)</name>
    <dbReference type="NCBI Taxonomy" id="264732"/>
    <lineage>
        <taxon>Bacteria</taxon>
        <taxon>Bacillati</taxon>
        <taxon>Bacillota</taxon>
        <taxon>Clostridia</taxon>
        <taxon>Moorellales</taxon>
        <taxon>Moorellaceae</taxon>
        <taxon>Moorella</taxon>
    </lineage>
</organism>
<keyword id="KW-0004">4Fe-4S</keyword>
<keyword id="KW-0169">Cobalamin biosynthesis</keyword>
<keyword id="KW-0408">Iron</keyword>
<keyword id="KW-0411">Iron-sulfur</keyword>
<keyword id="KW-0456">Lyase</keyword>
<keyword id="KW-0479">Metal-binding</keyword>
<keyword id="KW-0949">S-adenosyl-L-methionine</keyword>
<keyword id="KW-0862">Zinc</keyword>
<protein>
    <recommendedName>
        <fullName evidence="7">5-hydroxybenzimidazole synthase BzaA</fullName>
        <shortName evidence="7">5-OHBza synthase</shortName>
        <shortName>HBI synthase</shortName>
        <ecNumber evidence="1">4.1.99.23</ecNumber>
    </recommendedName>
</protein>
<accession>Q2RHR4</accession>
<gene>
    <name evidence="5" type="primary">bzaA</name>
    <name type="ordered locus">Moth_1723</name>
</gene>
<sequence>MNLIESARAGLITPEMEQVAVQEGVTPEFVRQGVADGTIVILRNARRQNVTPVGVGKGLRTKVSASVGLYGETGGIDVEVAKIKAAVEAGTDAIMDLSVSGDIEAMLAETLAVSPKPVGTLPLYQAMAEAGRKYGSSVNMRDEDLFDVIERHAAAGVDFLALHCGTTMNIVERARNEGRIDPLVSYGGSHLIGWMLANRRENPLYEHFDRVLAIARKYDVTISFADGMRPGCLADSLDGPQVEELVVLGELVRRAREAGVQVMVKGPGHVPLQQLKATVVLEKSLCHGAPYFVFGPLVTDIAIGYDHINAAIGGALSAWAGAEFLCYVTAAEHVGIPDIDQVREGVIAARIAAHAADLANGLTCAREWDRELSRARKELDWKRQIALAIDPERAGRLREERSDAAAAGCAMCGKYCAMEIVSRYLGTARHTC</sequence>
<name>BZAA_MOOTA</name>